<dbReference type="GO" id="GO:0005576">
    <property type="term" value="C:extracellular region"/>
    <property type="evidence" value="ECO:0007669"/>
    <property type="project" value="UniProtKB-SubCell"/>
</dbReference>
<dbReference type="GO" id="GO:0007218">
    <property type="term" value="P:neuropeptide signaling pathway"/>
    <property type="evidence" value="ECO:0007669"/>
    <property type="project" value="UniProtKB-KW"/>
</dbReference>
<reference evidence="5" key="1">
    <citation type="journal article" date="2012" name="Syst. Biol.">
        <title>Peptidomics-based phylogeny and biogeography of Mantophasmatodea (Hexapoda).</title>
        <authorList>
            <person name="Predel R."/>
            <person name="Neupert S."/>
            <person name="Huetteroth W."/>
            <person name="Kahnt J."/>
            <person name="Waidelich D."/>
            <person name="Roth S."/>
        </authorList>
    </citation>
    <scope>PROTEIN SEQUENCE</scope>
    <scope>AMIDATION AT LEU-9</scope>
    <source>
        <tissue evidence="3">Thoracic perisympathetic organs</tissue>
    </source>
</reference>
<proteinExistence type="evidence at protein level"/>
<organism>
    <name type="scientific">Tyrannophasma gladiator</name>
    <name type="common">Gladiator</name>
    <name type="synonym">Heel-walker</name>
    <dbReference type="NCBI Taxonomy" id="270861"/>
    <lineage>
        <taxon>Eukaryota</taxon>
        <taxon>Metazoa</taxon>
        <taxon>Ecdysozoa</taxon>
        <taxon>Arthropoda</taxon>
        <taxon>Hexapoda</taxon>
        <taxon>Insecta</taxon>
        <taxon>Pterygota</taxon>
        <taxon>Neoptera</taxon>
        <taxon>Polyneoptera</taxon>
        <taxon>Mantophasmatodea</taxon>
        <taxon>Mantophasmatodea incertae sedis</taxon>
        <taxon>Tyrannophasma</taxon>
    </lineage>
</organism>
<evidence type="ECO:0000250" key="1">
    <source>
        <dbReference type="UniProtKB" id="P34405"/>
    </source>
</evidence>
<evidence type="ECO:0000255" key="2"/>
<evidence type="ECO:0000269" key="3">
    <source>
    </source>
</evidence>
<evidence type="ECO:0000303" key="4">
    <source>
    </source>
</evidence>
<evidence type="ECO:0000305" key="5"/>
<evidence type="ECO:0000305" key="6">
    <source>
    </source>
</evidence>
<comment type="function">
    <text evidence="1">FMRFamides and FMRFamide-like peptides are neuropeptides.</text>
</comment>
<comment type="subcellular location">
    <subcellularLocation>
        <location evidence="6">Secreted</location>
    </subcellularLocation>
</comment>
<comment type="similarity">
    <text evidence="2">Belongs to the FARP (FMRF amide related peptide) family.</text>
</comment>
<protein>
    <recommendedName>
        <fullName evidence="4">Extended FMRFamide-8</fullName>
        <shortName evidence="4">FMRFa-8</shortName>
    </recommendedName>
</protein>
<keyword id="KW-0027">Amidation</keyword>
<keyword id="KW-0903">Direct protein sequencing</keyword>
<keyword id="KW-0527">Neuropeptide</keyword>
<keyword id="KW-0964">Secreted</keyword>
<accession>B3A0I2</accession>
<sequence length="9" mass="1077">ARSDNFVRL</sequence>
<feature type="peptide" id="PRO_0000421537" description="Extended FMRFamide-8" evidence="3">
    <location>
        <begin position="1"/>
        <end position="9"/>
    </location>
</feature>
<feature type="modified residue" description="Leucine amide" evidence="3">
    <location>
        <position position="9"/>
    </location>
</feature>
<feature type="unsure residue" description="L or I" evidence="3">
    <location>
        <position position="9"/>
    </location>
</feature>
<name>FAR8_TYRGL</name>